<name>Y2196_RIPO1</name>
<keyword id="KW-0223">Dioxygenase</keyword>
<keyword id="KW-0408">Iron</keyword>
<keyword id="KW-0479">Metal-binding</keyword>
<keyword id="KW-0560">Oxidoreductase</keyword>
<keyword id="KW-1185">Reference proteome</keyword>
<keyword id="KW-0847">Vitamin C</keyword>
<evidence type="ECO:0000255" key="1">
    <source>
        <dbReference type="HAMAP-Rule" id="MF_00657"/>
    </source>
</evidence>
<protein>
    <recommendedName>
        <fullName evidence="1">PKHD-type hydroxylase PCC8801_2196</fullName>
        <ecNumber evidence="1">1.14.11.-</ecNumber>
    </recommendedName>
</protein>
<proteinExistence type="inferred from homology"/>
<sequence length="222" mass="25293">MILTINEVLTSSELNKLLDGLSRAPFVDGKTTAGWHAKLVKNTVQLDKNSQEWKKAENIVKTALDRNMLLKMAVLPKRIHSLLFSRYETGMSYGSHVDNGFMGGQEFWRSDVSFTLFLTSPDSYKGGELVIEMTEGERIYKLEAGSMIVYPSSFLHRVETVTDGVRLVVVGWIESLVRDPSEREFLFDLDTVRRSIFTKEGKSLEFDILSKTYANLLRKWGK</sequence>
<comment type="cofactor">
    <cofactor evidence="1">
        <name>Fe(2+)</name>
        <dbReference type="ChEBI" id="CHEBI:29033"/>
    </cofactor>
    <text evidence="1">Binds 1 Fe(2+) ion per subunit.</text>
</comment>
<comment type="cofactor">
    <cofactor evidence="1">
        <name>L-ascorbate</name>
        <dbReference type="ChEBI" id="CHEBI:38290"/>
    </cofactor>
</comment>
<accession>B7K077</accession>
<feature type="chain" id="PRO_1000131208" description="PKHD-type hydroxylase PCC8801_2196">
    <location>
        <begin position="1"/>
        <end position="222"/>
    </location>
</feature>
<feature type="domain" description="Fe2OG dioxygenase" evidence="1">
    <location>
        <begin position="78"/>
        <end position="175"/>
    </location>
</feature>
<feature type="binding site" evidence="1">
    <location>
        <position position="96"/>
    </location>
    <ligand>
        <name>Fe cation</name>
        <dbReference type="ChEBI" id="CHEBI:24875"/>
    </ligand>
</feature>
<feature type="binding site" evidence="1">
    <location>
        <position position="98"/>
    </location>
    <ligand>
        <name>Fe cation</name>
        <dbReference type="ChEBI" id="CHEBI:24875"/>
    </ligand>
</feature>
<feature type="binding site" evidence="1">
    <location>
        <position position="156"/>
    </location>
    <ligand>
        <name>Fe cation</name>
        <dbReference type="ChEBI" id="CHEBI:24875"/>
    </ligand>
</feature>
<feature type="binding site" evidence="1">
    <location>
        <position position="166"/>
    </location>
    <ligand>
        <name>2-oxoglutarate</name>
        <dbReference type="ChEBI" id="CHEBI:16810"/>
    </ligand>
</feature>
<organism>
    <name type="scientific">Rippkaea orientalis (strain PCC 8801 / RF-1)</name>
    <name type="common">Cyanothece sp. (strain PCC 8801)</name>
    <dbReference type="NCBI Taxonomy" id="41431"/>
    <lineage>
        <taxon>Bacteria</taxon>
        <taxon>Bacillati</taxon>
        <taxon>Cyanobacteriota</taxon>
        <taxon>Cyanophyceae</taxon>
        <taxon>Oscillatoriophycideae</taxon>
        <taxon>Chroococcales</taxon>
        <taxon>Aphanothecaceae</taxon>
        <taxon>Rippkaea</taxon>
        <taxon>Rippkaea orientalis</taxon>
    </lineage>
</organism>
<reference key="1">
    <citation type="journal article" date="2011" name="MBio">
        <title>Novel metabolic attributes of the genus Cyanothece, comprising a group of unicellular nitrogen-fixing Cyanobacteria.</title>
        <authorList>
            <person name="Bandyopadhyay A."/>
            <person name="Elvitigala T."/>
            <person name="Welsh E."/>
            <person name="Stockel J."/>
            <person name="Liberton M."/>
            <person name="Min H."/>
            <person name="Sherman L.A."/>
            <person name="Pakrasi H.B."/>
        </authorList>
    </citation>
    <scope>NUCLEOTIDE SEQUENCE [LARGE SCALE GENOMIC DNA]</scope>
    <source>
        <strain>PCC 8801 / RF-1</strain>
    </source>
</reference>
<dbReference type="EC" id="1.14.11.-" evidence="1"/>
<dbReference type="EMBL" id="CP001287">
    <property type="protein sequence ID" value="ACK66224.1"/>
    <property type="molecule type" value="Genomic_DNA"/>
</dbReference>
<dbReference type="RefSeq" id="WP_012595492.1">
    <property type="nucleotide sequence ID" value="NC_011726.1"/>
</dbReference>
<dbReference type="SMR" id="B7K077"/>
<dbReference type="STRING" id="41431.PCC8801_2196"/>
<dbReference type="KEGG" id="cyp:PCC8801_2196"/>
<dbReference type="eggNOG" id="COG3128">
    <property type="taxonomic scope" value="Bacteria"/>
</dbReference>
<dbReference type="HOGENOM" id="CLU_106663_0_0_3"/>
<dbReference type="OrthoDB" id="9812472at2"/>
<dbReference type="Proteomes" id="UP000008204">
    <property type="component" value="Chromosome"/>
</dbReference>
<dbReference type="GO" id="GO:0016706">
    <property type="term" value="F:2-oxoglutarate-dependent dioxygenase activity"/>
    <property type="evidence" value="ECO:0007669"/>
    <property type="project" value="UniProtKB-UniRule"/>
</dbReference>
<dbReference type="GO" id="GO:0005506">
    <property type="term" value="F:iron ion binding"/>
    <property type="evidence" value="ECO:0007669"/>
    <property type="project" value="UniProtKB-UniRule"/>
</dbReference>
<dbReference type="GO" id="GO:0031418">
    <property type="term" value="F:L-ascorbic acid binding"/>
    <property type="evidence" value="ECO:0007669"/>
    <property type="project" value="UniProtKB-KW"/>
</dbReference>
<dbReference type="GO" id="GO:0006974">
    <property type="term" value="P:DNA damage response"/>
    <property type="evidence" value="ECO:0007669"/>
    <property type="project" value="TreeGrafter"/>
</dbReference>
<dbReference type="GO" id="GO:0006879">
    <property type="term" value="P:intracellular iron ion homeostasis"/>
    <property type="evidence" value="ECO:0007669"/>
    <property type="project" value="TreeGrafter"/>
</dbReference>
<dbReference type="Gene3D" id="2.60.120.620">
    <property type="entry name" value="q2cbj1_9rhob like domain"/>
    <property type="match status" value="1"/>
</dbReference>
<dbReference type="Gene3D" id="4.10.860.20">
    <property type="entry name" value="Rabenosyn, Rab binding domain"/>
    <property type="match status" value="1"/>
</dbReference>
<dbReference type="HAMAP" id="MF_00657">
    <property type="entry name" value="Hydroxyl_YbiX"/>
    <property type="match status" value="1"/>
</dbReference>
<dbReference type="InterPro" id="IPR005123">
    <property type="entry name" value="Oxoglu/Fe-dep_dioxygenase_dom"/>
</dbReference>
<dbReference type="InterPro" id="IPR041097">
    <property type="entry name" value="PKHD_C"/>
</dbReference>
<dbReference type="InterPro" id="IPR023550">
    <property type="entry name" value="PKHD_hydroxylase"/>
</dbReference>
<dbReference type="InterPro" id="IPR006620">
    <property type="entry name" value="Pro_4_hyd_alph"/>
</dbReference>
<dbReference type="InterPro" id="IPR044862">
    <property type="entry name" value="Pro_4_hyd_alph_FE2OG_OXY"/>
</dbReference>
<dbReference type="InterPro" id="IPR011051">
    <property type="entry name" value="RmlC_Cupin_sf"/>
</dbReference>
<dbReference type="NCBIfam" id="NF003974">
    <property type="entry name" value="PRK05467.1-3"/>
    <property type="match status" value="1"/>
</dbReference>
<dbReference type="NCBIfam" id="NF003975">
    <property type="entry name" value="PRK05467.1-4"/>
    <property type="match status" value="1"/>
</dbReference>
<dbReference type="PANTHER" id="PTHR41536">
    <property type="entry name" value="PKHD-TYPE HYDROXYLASE YBIX"/>
    <property type="match status" value="1"/>
</dbReference>
<dbReference type="PANTHER" id="PTHR41536:SF1">
    <property type="entry name" value="PKHD-TYPE HYDROXYLASE YBIX"/>
    <property type="match status" value="1"/>
</dbReference>
<dbReference type="Pfam" id="PF13640">
    <property type="entry name" value="2OG-FeII_Oxy_3"/>
    <property type="match status" value="1"/>
</dbReference>
<dbReference type="Pfam" id="PF18331">
    <property type="entry name" value="PKHD_C"/>
    <property type="match status" value="1"/>
</dbReference>
<dbReference type="SMART" id="SM00702">
    <property type="entry name" value="P4Hc"/>
    <property type="match status" value="1"/>
</dbReference>
<dbReference type="SUPFAM" id="SSF51182">
    <property type="entry name" value="RmlC-like cupins"/>
    <property type="match status" value="1"/>
</dbReference>
<dbReference type="PROSITE" id="PS51471">
    <property type="entry name" value="FE2OG_OXY"/>
    <property type="match status" value="1"/>
</dbReference>
<gene>
    <name type="ordered locus">PCC8801_2196</name>
</gene>